<accession>Q6SW66</accession>
<accession>D2K3N4</accession>
<sequence length="325" mass="35964">MPSGCGDDADSTGNALRRLPHVRKRIGKRKHLDIYRRLLRVFPSFVALNRLLGGLFPPELQKYRRRLFIEVRLSRRIPDCVLVFLPPDSGSRGIVYCYVIEFKTTYSDADDQSVRWHATHSLQYAEGLRQLKGALVDFDFLRLPRGGGQVWSVVPSLVFFQQKADRPSFYRAFRSGRFDLCTDSVLDYLGRRQDESVAHLLAATRRRLLRAARGKRAALPRARASAVAGGRGGGNARRGLARGRAHGPGAQTVSASGAEGSGSQGTDLLRGSRRARVRGGGAVEPAVRARRRTVAADAATTTVSSAFVVPRDRRGRSFRRPTRSL</sequence>
<protein>
    <recommendedName>
        <fullName>Protein UL76</fullName>
    </recommendedName>
</protein>
<comment type="function">
    <text evidence="1 3">May participate in nuclear egress of viral particles. Plays a role in the dispersal of several host nucleolar proteins including NCL/nucleolin and NPM1. Since deletion of host NCL/nucleolin negatively impact on nuclear egress, UL76 supposedly acts on this process through its effect on host nucleoli (By similarity). Induces cell cycle arrest in host cells at the G2/M phase following by apoptosis. The mechanism involves the inhibition of host mitotic complex cyclinB/CDK1.</text>
</comment>
<comment type="subcellular location">
    <subcellularLocation>
        <location>Virion</location>
    </subcellularLocation>
    <subcellularLocation>
        <location evidence="1">Host cytoplasm</location>
    </subcellularLocation>
    <subcellularLocation>
        <location evidence="1">Host nucleus</location>
        <location evidence="1">Host nucleolus</location>
    </subcellularLocation>
    <subcellularLocation>
        <location evidence="1">Host Golgi apparatus</location>
    </subcellularLocation>
</comment>
<comment type="induction">
    <text>Expressed late in the infection cycle.</text>
</comment>
<comment type="similarity">
    <text evidence="4">Belongs to the herpesviridae UL24 family.</text>
</comment>
<reference key="1">
    <citation type="journal article" date="2004" name="J. Gen. Virol.">
        <title>Genetic content of wild-type human cytomegalovirus.</title>
        <authorList>
            <person name="Dolan A."/>
            <person name="Cunningham C."/>
            <person name="Hector R.D."/>
            <person name="Hassan-Walker A.F."/>
            <person name="Lee L."/>
            <person name="Addison C."/>
            <person name="Dargan D.J."/>
            <person name="McGeoch D.J."/>
            <person name="Gatherer D."/>
            <person name="Emery V.C."/>
            <person name="Griffiths P.D."/>
            <person name="Sinzger C."/>
            <person name="McSharry B.P."/>
            <person name="Wilkinson G.W.G."/>
            <person name="Davison A.J."/>
        </authorList>
    </citation>
    <scope>NUCLEOTIDE SEQUENCE [LARGE SCALE GENOMIC DNA]</scope>
</reference>
<reference key="2">
    <citation type="journal article" date="2009" name="Arch. Virol.">
        <title>The conserved UL24 family of human alpha, beta and gamma herpesviruses induces cell cycle arrest and inactivation of the cyclinB/cdc2 complex.</title>
        <authorList>
            <person name="Nascimento R."/>
            <person name="Dias J.D."/>
            <person name="Parkhouse R.M."/>
        </authorList>
    </citation>
    <scope>FUNCTION</scope>
</reference>
<organism>
    <name type="scientific">Human cytomegalovirus (strain Merlin)</name>
    <name type="common">HHV-5</name>
    <name type="synonym">Human herpesvirus 5</name>
    <dbReference type="NCBI Taxonomy" id="295027"/>
    <lineage>
        <taxon>Viruses</taxon>
        <taxon>Duplodnaviria</taxon>
        <taxon>Heunggongvirae</taxon>
        <taxon>Peploviricota</taxon>
        <taxon>Herviviricetes</taxon>
        <taxon>Herpesvirales</taxon>
        <taxon>Orthoherpesviridae</taxon>
        <taxon>Betaherpesvirinae</taxon>
        <taxon>Cytomegalovirus</taxon>
        <taxon>Cytomegalovirus humanbeta5</taxon>
        <taxon>Human cytomegalovirus</taxon>
    </lineage>
</organism>
<evidence type="ECO:0000250" key="1"/>
<evidence type="ECO:0000256" key="2">
    <source>
        <dbReference type="SAM" id="MobiDB-lite"/>
    </source>
</evidence>
<evidence type="ECO:0000269" key="3">
    <source>
    </source>
</evidence>
<evidence type="ECO:0000305" key="4"/>
<gene>
    <name type="primary">UL76</name>
</gene>
<proteinExistence type="evidence at transcript level"/>
<feature type="chain" id="PRO_0000416720" description="Protein UL76">
    <location>
        <begin position="1"/>
        <end position="325"/>
    </location>
</feature>
<feature type="region of interest" description="Disordered" evidence="2">
    <location>
        <begin position="222"/>
        <end position="286"/>
    </location>
</feature>
<feature type="compositionally biased region" description="Low complexity" evidence="2">
    <location>
        <begin position="247"/>
        <end position="258"/>
    </location>
</feature>
<name>UL76_HCMVM</name>
<keyword id="KW-1035">Host cytoplasm</keyword>
<keyword id="KW-1079">Host G2/M cell cycle arrest by virus</keyword>
<keyword id="KW-1040">Host Golgi apparatus</keyword>
<keyword id="KW-1048">Host nucleus</keyword>
<keyword id="KW-0945">Host-virus interaction</keyword>
<keyword id="KW-0426">Late protein</keyword>
<keyword id="KW-1121">Modulation of host cell cycle by virus</keyword>
<keyword id="KW-1185">Reference proteome</keyword>
<keyword id="KW-0946">Virion</keyword>
<organismHost>
    <name type="scientific">Homo sapiens</name>
    <name type="common">Human</name>
    <dbReference type="NCBI Taxonomy" id="9606"/>
</organismHost>
<dbReference type="EMBL" id="AY446894">
    <property type="protein sequence ID" value="AAR31628.1"/>
    <property type="molecule type" value="Genomic_DNA"/>
</dbReference>
<dbReference type="RefSeq" id="YP_081524.1">
    <property type="nucleotide sequence ID" value="NC_006273.2"/>
</dbReference>
<dbReference type="BioGRID" id="1677989">
    <property type="interactions" value="2"/>
</dbReference>
<dbReference type="DNASU" id="3077435"/>
<dbReference type="GeneID" id="3077435"/>
<dbReference type="KEGG" id="vg:3077435"/>
<dbReference type="Reactome" id="R-HSA-9609690">
    <property type="pathway name" value="HCMV Early Events"/>
</dbReference>
<dbReference type="Reactome" id="R-HSA-9610379">
    <property type="pathway name" value="HCMV Late Events"/>
</dbReference>
<dbReference type="Proteomes" id="UP000000938">
    <property type="component" value="Segment"/>
</dbReference>
<dbReference type="GO" id="GO:0044177">
    <property type="term" value="C:host cell Golgi apparatus"/>
    <property type="evidence" value="ECO:0007669"/>
    <property type="project" value="UniProtKB-SubCell"/>
</dbReference>
<dbReference type="GO" id="GO:0044196">
    <property type="term" value="C:host cell nucleolus"/>
    <property type="evidence" value="ECO:0007669"/>
    <property type="project" value="UniProtKB-SubCell"/>
</dbReference>
<dbReference type="GO" id="GO:0072517">
    <property type="term" value="C:host cell viral assembly compartment"/>
    <property type="evidence" value="ECO:0000304"/>
    <property type="project" value="Reactome"/>
</dbReference>
<dbReference type="GO" id="GO:0019033">
    <property type="term" value="C:viral tegument"/>
    <property type="evidence" value="ECO:0000304"/>
    <property type="project" value="Reactome"/>
</dbReference>
<dbReference type="GO" id="GO:0039592">
    <property type="term" value="P:symbiont-mediated arrest of host cell cycle during G2/M transition"/>
    <property type="evidence" value="ECO:0007669"/>
    <property type="project" value="UniProtKB-KW"/>
</dbReference>
<dbReference type="InterPro" id="IPR002580">
    <property type="entry name" value="Herpes_UL24"/>
</dbReference>
<dbReference type="Pfam" id="PF01646">
    <property type="entry name" value="Herpes_UL24"/>
    <property type="match status" value="1"/>
</dbReference>